<accession>Q57678</accession>
<keyword id="KW-0963">Cytoplasm</keyword>
<keyword id="KW-0238">DNA-binding</keyword>
<keyword id="KW-0255">Endonuclease</keyword>
<keyword id="KW-0378">Hydrolase</keyword>
<keyword id="KW-0540">Nuclease</keyword>
<keyword id="KW-1185">Reference proteome</keyword>
<feature type="chain" id="PRO_0000155691" description="Endonuclease NucS">
    <location>
        <begin position="1"/>
        <end position="263"/>
    </location>
</feature>
<dbReference type="EC" id="3.1.-.-" evidence="1"/>
<dbReference type="EMBL" id="L77117">
    <property type="protein sequence ID" value="AAB98210.1"/>
    <property type="molecule type" value="Genomic_DNA"/>
</dbReference>
<dbReference type="PIR" id="B64328">
    <property type="entry name" value="B64328"/>
</dbReference>
<dbReference type="SMR" id="Q57678"/>
<dbReference type="STRING" id="243232.MJ_0225"/>
<dbReference type="PaxDb" id="243232-MJ_0225"/>
<dbReference type="EnsemblBacteria" id="AAB98210">
    <property type="protein sequence ID" value="AAB98210"/>
    <property type="gene ID" value="MJ_0225"/>
</dbReference>
<dbReference type="KEGG" id="mja:MJ_0225"/>
<dbReference type="eggNOG" id="arCOG01304">
    <property type="taxonomic scope" value="Archaea"/>
</dbReference>
<dbReference type="HOGENOM" id="CLU_069350_1_0_2"/>
<dbReference type="InParanoid" id="Q57678"/>
<dbReference type="OrthoDB" id="15177at2157"/>
<dbReference type="PhylomeDB" id="Q57678"/>
<dbReference type="Proteomes" id="UP000000805">
    <property type="component" value="Chromosome"/>
</dbReference>
<dbReference type="GO" id="GO:0005737">
    <property type="term" value="C:cytoplasm"/>
    <property type="evidence" value="ECO:0007669"/>
    <property type="project" value="UniProtKB-SubCell"/>
</dbReference>
<dbReference type="GO" id="GO:0003677">
    <property type="term" value="F:DNA binding"/>
    <property type="evidence" value="ECO:0007669"/>
    <property type="project" value="UniProtKB-KW"/>
</dbReference>
<dbReference type="GO" id="GO:0000014">
    <property type="term" value="F:single-stranded DNA endodeoxyribonuclease activity"/>
    <property type="evidence" value="ECO:0007669"/>
    <property type="project" value="UniProtKB-UniRule"/>
</dbReference>
<dbReference type="CDD" id="cd22341">
    <property type="entry name" value="NucS-like"/>
    <property type="match status" value="1"/>
</dbReference>
<dbReference type="Gene3D" id="2.70.180.20">
    <property type="match status" value="1"/>
</dbReference>
<dbReference type="Gene3D" id="3.40.1350.10">
    <property type="match status" value="1"/>
</dbReference>
<dbReference type="HAMAP" id="MF_00722">
    <property type="entry name" value="NucS"/>
    <property type="match status" value="1"/>
</dbReference>
<dbReference type="InterPro" id="IPR002793">
    <property type="entry name" value="Endonuclease_NucS"/>
</dbReference>
<dbReference type="InterPro" id="IPR048301">
    <property type="entry name" value="NucS_C"/>
</dbReference>
<dbReference type="InterPro" id="IPR048302">
    <property type="entry name" value="NucS_N"/>
</dbReference>
<dbReference type="InterPro" id="IPR049173">
    <property type="entry name" value="NucS_N_sf"/>
</dbReference>
<dbReference type="InterPro" id="IPR011856">
    <property type="entry name" value="tRNA_endonuc-like_dom_sf"/>
</dbReference>
<dbReference type="NCBIfam" id="NF003270">
    <property type="entry name" value="PRK04247.1"/>
    <property type="match status" value="1"/>
</dbReference>
<dbReference type="PANTHER" id="PTHR38814">
    <property type="entry name" value="ENDONUCLEASE NUCS"/>
    <property type="match status" value="1"/>
</dbReference>
<dbReference type="PANTHER" id="PTHR38814:SF1">
    <property type="entry name" value="ENDONUCLEASE NUCS"/>
    <property type="match status" value="1"/>
</dbReference>
<dbReference type="Pfam" id="PF01939">
    <property type="entry name" value="NucS_C"/>
    <property type="match status" value="1"/>
</dbReference>
<dbReference type="Pfam" id="PF21003">
    <property type="entry name" value="NucS_N"/>
    <property type="match status" value="1"/>
</dbReference>
<organism>
    <name type="scientific">Methanocaldococcus jannaschii (strain ATCC 43067 / DSM 2661 / JAL-1 / JCM 10045 / NBRC 100440)</name>
    <name type="common">Methanococcus jannaschii</name>
    <dbReference type="NCBI Taxonomy" id="243232"/>
    <lineage>
        <taxon>Archaea</taxon>
        <taxon>Methanobacteriati</taxon>
        <taxon>Methanobacteriota</taxon>
        <taxon>Methanomada group</taxon>
        <taxon>Methanococci</taxon>
        <taxon>Methanococcales</taxon>
        <taxon>Methanocaldococcaceae</taxon>
        <taxon>Methanocaldococcus</taxon>
    </lineage>
</organism>
<protein>
    <recommendedName>
        <fullName evidence="1">Endonuclease NucS</fullName>
        <ecNumber evidence="1">3.1.-.-</ecNumber>
    </recommendedName>
</protein>
<sequence>MMRLEKVFYLTNPTTKDLENFIDMYVFKYILILLARCKVFYEGRAKSQLEEGDRVIIIKPDGAFLIHKDKKREPVNWQPSGSSIIWEVEDNFFILKSIRRKPKEELKVVISEVYHACAFNCEDYEEINLRGSESEMAEMIFRNPDLIEEGFKPISREYQIPTGIVDILGKDKENKWVILELKRRRADLQAVSQLKRYVEYFKNKYGEDKVRGILVSPSLTTGAEKLLKEENLEFKRLNPPKGSKRDLKHNIKTKKTTVLDEWL</sequence>
<name>NUCS_METJA</name>
<proteinExistence type="inferred from homology"/>
<evidence type="ECO:0000255" key="1">
    <source>
        <dbReference type="HAMAP-Rule" id="MF_00722"/>
    </source>
</evidence>
<reference key="1">
    <citation type="journal article" date="1996" name="Science">
        <title>Complete genome sequence of the methanogenic archaeon, Methanococcus jannaschii.</title>
        <authorList>
            <person name="Bult C.J."/>
            <person name="White O."/>
            <person name="Olsen G.J."/>
            <person name="Zhou L."/>
            <person name="Fleischmann R.D."/>
            <person name="Sutton G.G."/>
            <person name="Blake J.A."/>
            <person name="FitzGerald L.M."/>
            <person name="Clayton R.A."/>
            <person name="Gocayne J.D."/>
            <person name="Kerlavage A.R."/>
            <person name="Dougherty B.A."/>
            <person name="Tomb J.-F."/>
            <person name="Adams M.D."/>
            <person name="Reich C.I."/>
            <person name="Overbeek R."/>
            <person name="Kirkness E.F."/>
            <person name="Weinstock K.G."/>
            <person name="Merrick J.M."/>
            <person name="Glodek A."/>
            <person name="Scott J.L."/>
            <person name="Geoghagen N.S.M."/>
            <person name="Weidman J.F."/>
            <person name="Fuhrmann J.L."/>
            <person name="Nguyen D."/>
            <person name="Utterback T.R."/>
            <person name="Kelley J.M."/>
            <person name="Peterson J.D."/>
            <person name="Sadow P.W."/>
            <person name="Hanna M.C."/>
            <person name="Cotton M.D."/>
            <person name="Roberts K.M."/>
            <person name="Hurst M.A."/>
            <person name="Kaine B.P."/>
            <person name="Borodovsky M."/>
            <person name="Klenk H.-P."/>
            <person name="Fraser C.M."/>
            <person name="Smith H.O."/>
            <person name="Woese C.R."/>
            <person name="Venter J.C."/>
        </authorList>
    </citation>
    <scope>NUCLEOTIDE SEQUENCE [LARGE SCALE GENOMIC DNA]</scope>
    <source>
        <strain>ATCC 43067 / DSM 2661 / JAL-1 / JCM 10045 / NBRC 100440</strain>
    </source>
</reference>
<gene>
    <name evidence="1" type="primary">nucS</name>
    <name type="ordered locus">MJ0225</name>
</gene>
<comment type="function">
    <text evidence="1">Cleaves both 3' and 5' ssDNA extremities of branched DNA structures.</text>
</comment>
<comment type="subcellular location">
    <subcellularLocation>
        <location evidence="1">Cytoplasm</location>
    </subcellularLocation>
</comment>
<comment type="similarity">
    <text evidence="1">Belongs to the NucS endonuclease family.</text>
</comment>